<feature type="chain" id="PRO_0000351863" description="Protein-L-isoaspartate O-methyltransferase 2">
    <location>
        <begin position="1"/>
        <end position="217"/>
    </location>
</feature>
<feature type="active site" evidence="1">
    <location>
        <position position="62"/>
    </location>
</feature>
<comment type="function">
    <text evidence="1">Catalyzes the methyl esterification of L-isoaspartyl residues in peptides and proteins that result from spontaneous decomposition of normal L-aspartyl and L-asparaginyl residues. It plays a role in the repair and/or degradation of damaged proteins.</text>
</comment>
<comment type="catalytic activity">
    <reaction evidence="1">
        <text>[protein]-L-isoaspartate + S-adenosyl-L-methionine = [protein]-L-isoaspartate alpha-methyl ester + S-adenosyl-L-homocysteine</text>
        <dbReference type="Rhea" id="RHEA:12705"/>
        <dbReference type="Rhea" id="RHEA-COMP:12143"/>
        <dbReference type="Rhea" id="RHEA-COMP:12144"/>
        <dbReference type="ChEBI" id="CHEBI:57856"/>
        <dbReference type="ChEBI" id="CHEBI:59789"/>
        <dbReference type="ChEBI" id="CHEBI:90596"/>
        <dbReference type="ChEBI" id="CHEBI:90598"/>
        <dbReference type="EC" id="2.1.1.77"/>
    </reaction>
</comment>
<comment type="subcellular location">
    <subcellularLocation>
        <location evidence="1">Cytoplasm</location>
    </subcellularLocation>
</comment>
<comment type="similarity">
    <text evidence="1">Belongs to the methyltransferase superfamily. L-isoaspartyl/D-aspartyl protein methyltransferase family.</text>
</comment>
<keyword id="KW-0963">Cytoplasm</keyword>
<keyword id="KW-0489">Methyltransferase</keyword>
<keyword id="KW-1185">Reference proteome</keyword>
<keyword id="KW-0949">S-adenosyl-L-methionine</keyword>
<keyword id="KW-0808">Transferase</keyword>
<organism>
    <name type="scientific">Geotalea uraniireducens (strain Rf4)</name>
    <name type="common">Geobacter uraniireducens</name>
    <dbReference type="NCBI Taxonomy" id="351605"/>
    <lineage>
        <taxon>Bacteria</taxon>
        <taxon>Pseudomonadati</taxon>
        <taxon>Thermodesulfobacteriota</taxon>
        <taxon>Desulfuromonadia</taxon>
        <taxon>Geobacterales</taxon>
        <taxon>Geobacteraceae</taxon>
        <taxon>Geotalea</taxon>
    </lineage>
</organism>
<gene>
    <name evidence="1" type="primary">pcm2</name>
    <name type="ordered locus">Gura_2618</name>
</gene>
<protein>
    <recommendedName>
        <fullName evidence="1">Protein-L-isoaspartate O-methyltransferase 2</fullName>
        <ecNumber evidence="1">2.1.1.77</ecNumber>
    </recommendedName>
    <alternativeName>
        <fullName evidence="1">L-isoaspartyl protein carboxyl methyltransferase 2</fullName>
    </alternativeName>
    <alternativeName>
        <fullName evidence="1">Protein L-isoaspartyl methyltransferase 2</fullName>
    </alternativeName>
    <alternativeName>
        <fullName evidence="1">Protein-beta-aspartate methyltransferase 2</fullName>
        <shortName evidence="1">PIMT 2</shortName>
    </alternativeName>
</protein>
<name>PIMT2_GEOUR</name>
<accession>A5G4S7</accession>
<proteinExistence type="inferred from homology"/>
<dbReference type="EC" id="2.1.1.77" evidence="1"/>
<dbReference type="EMBL" id="CP000698">
    <property type="protein sequence ID" value="ABQ26795.1"/>
    <property type="molecule type" value="Genomic_DNA"/>
</dbReference>
<dbReference type="SMR" id="A5G4S7"/>
<dbReference type="STRING" id="351605.Gura_2618"/>
<dbReference type="KEGG" id="gur:Gura_2618"/>
<dbReference type="HOGENOM" id="CLU_055432_2_0_7"/>
<dbReference type="Proteomes" id="UP000006695">
    <property type="component" value="Chromosome"/>
</dbReference>
<dbReference type="GO" id="GO:0005737">
    <property type="term" value="C:cytoplasm"/>
    <property type="evidence" value="ECO:0007669"/>
    <property type="project" value="UniProtKB-SubCell"/>
</dbReference>
<dbReference type="GO" id="GO:0004719">
    <property type="term" value="F:protein-L-isoaspartate (D-aspartate) O-methyltransferase activity"/>
    <property type="evidence" value="ECO:0007669"/>
    <property type="project" value="UniProtKB-UniRule"/>
</dbReference>
<dbReference type="GO" id="GO:0032259">
    <property type="term" value="P:methylation"/>
    <property type="evidence" value="ECO:0007669"/>
    <property type="project" value="UniProtKB-KW"/>
</dbReference>
<dbReference type="GO" id="GO:0036211">
    <property type="term" value="P:protein modification process"/>
    <property type="evidence" value="ECO:0007669"/>
    <property type="project" value="UniProtKB-UniRule"/>
</dbReference>
<dbReference type="GO" id="GO:0030091">
    <property type="term" value="P:protein repair"/>
    <property type="evidence" value="ECO:0007669"/>
    <property type="project" value="UniProtKB-UniRule"/>
</dbReference>
<dbReference type="CDD" id="cd02440">
    <property type="entry name" value="AdoMet_MTases"/>
    <property type="match status" value="1"/>
</dbReference>
<dbReference type="FunFam" id="3.40.50.150:FF:000010">
    <property type="entry name" value="Protein-L-isoaspartate O-methyltransferase"/>
    <property type="match status" value="1"/>
</dbReference>
<dbReference type="Gene3D" id="3.40.50.150">
    <property type="entry name" value="Vaccinia Virus protein VP39"/>
    <property type="match status" value="1"/>
</dbReference>
<dbReference type="HAMAP" id="MF_00090">
    <property type="entry name" value="PIMT"/>
    <property type="match status" value="1"/>
</dbReference>
<dbReference type="InterPro" id="IPR000682">
    <property type="entry name" value="PCMT"/>
</dbReference>
<dbReference type="InterPro" id="IPR029063">
    <property type="entry name" value="SAM-dependent_MTases_sf"/>
</dbReference>
<dbReference type="NCBIfam" id="TIGR00080">
    <property type="entry name" value="pimt"/>
    <property type="match status" value="1"/>
</dbReference>
<dbReference type="NCBIfam" id="NF001453">
    <property type="entry name" value="PRK00312.1"/>
    <property type="match status" value="1"/>
</dbReference>
<dbReference type="PANTHER" id="PTHR11579">
    <property type="entry name" value="PROTEIN-L-ISOASPARTATE O-METHYLTRANSFERASE"/>
    <property type="match status" value="1"/>
</dbReference>
<dbReference type="PANTHER" id="PTHR11579:SF0">
    <property type="entry name" value="PROTEIN-L-ISOASPARTATE(D-ASPARTATE) O-METHYLTRANSFERASE"/>
    <property type="match status" value="1"/>
</dbReference>
<dbReference type="Pfam" id="PF01135">
    <property type="entry name" value="PCMT"/>
    <property type="match status" value="1"/>
</dbReference>
<dbReference type="SUPFAM" id="SSF53335">
    <property type="entry name" value="S-adenosyl-L-methionine-dependent methyltransferases"/>
    <property type="match status" value="1"/>
</dbReference>
<dbReference type="PROSITE" id="PS01279">
    <property type="entry name" value="PCMT"/>
    <property type="match status" value="1"/>
</dbReference>
<reference key="1">
    <citation type="submission" date="2007-05" db="EMBL/GenBank/DDBJ databases">
        <title>Complete sequence of Geobacter uraniireducens Rf4.</title>
        <authorList>
            <consortium name="US DOE Joint Genome Institute"/>
            <person name="Copeland A."/>
            <person name="Lucas S."/>
            <person name="Lapidus A."/>
            <person name="Barry K."/>
            <person name="Detter J.C."/>
            <person name="Glavina del Rio T."/>
            <person name="Hammon N."/>
            <person name="Israni S."/>
            <person name="Dalin E."/>
            <person name="Tice H."/>
            <person name="Pitluck S."/>
            <person name="Chertkov O."/>
            <person name="Brettin T."/>
            <person name="Bruce D."/>
            <person name="Han C."/>
            <person name="Schmutz J."/>
            <person name="Larimer F."/>
            <person name="Land M."/>
            <person name="Hauser L."/>
            <person name="Kyrpides N."/>
            <person name="Mikhailova N."/>
            <person name="Shelobolina E."/>
            <person name="Aklujkar M."/>
            <person name="Lovley D."/>
            <person name="Richardson P."/>
        </authorList>
    </citation>
    <scope>NUCLEOTIDE SEQUENCE [LARGE SCALE GENOMIC DNA]</scope>
    <source>
        <strain>ATCC BAA-1134 / JCM 13001 / Rf4</strain>
    </source>
</reference>
<evidence type="ECO:0000255" key="1">
    <source>
        <dbReference type="HAMAP-Rule" id="MF_00090"/>
    </source>
</evidence>
<sequence>MINLDIARRRMVENQIVARGIKDRRVIDAMLKVPRHIFVEEAMSAQAYSDSSLPIGEKQTISQPYMVALMSGMLQLTGKEKVLELGTGSGYQAAILAELADRVYTVERIRPLALRARKALDSLGYLNVNLKIGDGTDGWASEAPFDAILVTAGAPDVPMHLIDQLAVGGKLVIPVGNQSEQTLVRITKGENGAVSREDSIGCRFVKLIGRYGWSGED</sequence>